<organism>
    <name type="scientific">Shewanella baltica (strain OS185)</name>
    <dbReference type="NCBI Taxonomy" id="402882"/>
    <lineage>
        <taxon>Bacteria</taxon>
        <taxon>Pseudomonadati</taxon>
        <taxon>Pseudomonadota</taxon>
        <taxon>Gammaproteobacteria</taxon>
        <taxon>Alteromonadales</taxon>
        <taxon>Shewanellaceae</taxon>
        <taxon>Shewanella</taxon>
    </lineage>
</organism>
<gene>
    <name evidence="1" type="primary">udk</name>
    <name type="ordered locus">Shew185_2456</name>
</gene>
<dbReference type="EC" id="2.7.1.48" evidence="1"/>
<dbReference type="EMBL" id="CP000753">
    <property type="protein sequence ID" value="ABS08593.1"/>
    <property type="molecule type" value="Genomic_DNA"/>
</dbReference>
<dbReference type="RefSeq" id="WP_006081926.1">
    <property type="nucleotide sequence ID" value="NC_009665.1"/>
</dbReference>
<dbReference type="SMR" id="A6WP54"/>
<dbReference type="GeneID" id="11772675"/>
<dbReference type="KEGG" id="sbm:Shew185_2456"/>
<dbReference type="HOGENOM" id="CLU_021278_1_2_6"/>
<dbReference type="UniPathway" id="UPA00574">
    <property type="reaction ID" value="UER00637"/>
</dbReference>
<dbReference type="UniPathway" id="UPA00579">
    <property type="reaction ID" value="UER00640"/>
</dbReference>
<dbReference type="GO" id="GO:0005737">
    <property type="term" value="C:cytoplasm"/>
    <property type="evidence" value="ECO:0007669"/>
    <property type="project" value="UniProtKB-SubCell"/>
</dbReference>
<dbReference type="GO" id="GO:0005524">
    <property type="term" value="F:ATP binding"/>
    <property type="evidence" value="ECO:0007669"/>
    <property type="project" value="UniProtKB-UniRule"/>
</dbReference>
<dbReference type="GO" id="GO:0043771">
    <property type="term" value="F:cytidine kinase activity"/>
    <property type="evidence" value="ECO:0007669"/>
    <property type="project" value="RHEA"/>
</dbReference>
<dbReference type="GO" id="GO:0004849">
    <property type="term" value="F:uridine kinase activity"/>
    <property type="evidence" value="ECO:0007669"/>
    <property type="project" value="UniProtKB-UniRule"/>
</dbReference>
<dbReference type="GO" id="GO:0044211">
    <property type="term" value="P:CTP salvage"/>
    <property type="evidence" value="ECO:0007669"/>
    <property type="project" value="UniProtKB-UniRule"/>
</dbReference>
<dbReference type="GO" id="GO:0044206">
    <property type="term" value="P:UMP salvage"/>
    <property type="evidence" value="ECO:0007669"/>
    <property type="project" value="UniProtKB-UniRule"/>
</dbReference>
<dbReference type="CDD" id="cd02023">
    <property type="entry name" value="UMPK"/>
    <property type="match status" value="1"/>
</dbReference>
<dbReference type="Gene3D" id="3.40.50.300">
    <property type="entry name" value="P-loop containing nucleotide triphosphate hydrolases"/>
    <property type="match status" value="1"/>
</dbReference>
<dbReference type="HAMAP" id="MF_00551">
    <property type="entry name" value="Uridine_kinase"/>
    <property type="match status" value="1"/>
</dbReference>
<dbReference type="InterPro" id="IPR027417">
    <property type="entry name" value="P-loop_NTPase"/>
</dbReference>
<dbReference type="InterPro" id="IPR006083">
    <property type="entry name" value="PRK/URK"/>
</dbReference>
<dbReference type="InterPro" id="IPR026008">
    <property type="entry name" value="Uridine_kinase"/>
</dbReference>
<dbReference type="InterPro" id="IPR000764">
    <property type="entry name" value="Uridine_kinase-like"/>
</dbReference>
<dbReference type="NCBIfam" id="NF004018">
    <property type="entry name" value="PRK05480.1"/>
    <property type="match status" value="1"/>
</dbReference>
<dbReference type="NCBIfam" id="TIGR00235">
    <property type="entry name" value="udk"/>
    <property type="match status" value="1"/>
</dbReference>
<dbReference type="PANTHER" id="PTHR10285">
    <property type="entry name" value="URIDINE KINASE"/>
    <property type="match status" value="1"/>
</dbReference>
<dbReference type="Pfam" id="PF00485">
    <property type="entry name" value="PRK"/>
    <property type="match status" value="1"/>
</dbReference>
<dbReference type="PRINTS" id="PR00988">
    <property type="entry name" value="URIDINKINASE"/>
</dbReference>
<dbReference type="SUPFAM" id="SSF52540">
    <property type="entry name" value="P-loop containing nucleoside triphosphate hydrolases"/>
    <property type="match status" value="1"/>
</dbReference>
<evidence type="ECO:0000255" key="1">
    <source>
        <dbReference type="HAMAP-Rule" id="MF_00551"/>
    </source>
</evidence>
<reference key="1">
    <citation type="submission" date="2007-07" db="EMBL/GenBank/DDBJ databases">
        <title>Complete sequence of chromosome of Shewanella baltica OS185.</title>
        <authorList>
            <consortium name="US DOE Joint Genome Institute"/>
            <person name="Copeland A."/>
            <person name="Lucas S."/>
            <person name="Lapidus A."/>
            <person name="Barry K."/>
            <person name="Glavina del Rio T."/>
            <person name="Dalin E."/>
            <person name="Tice H."/>
            <person name="Pitluck S."/>
            <person name="Sims D."/>
            <person name="Brettin T."/>
            <person name="Bruce D."/>
            <person name="Detter J.C."/>
            <person name="Han C."/>
            <person name="Schmutz J."/>
            <person name="Larimer F."/>
            <person name="Land M."/>
            <person name="Hauser L."/>
            <person name="Kyrpides N."/>
            <person name="Mikhailova N."/>
            <person name="Brettar I."/>
            <person name="Rodrigues J."/>
            <person name="Konstantinidis K."/>
            <person name="Tiedje J."/>
            <person name="Richardson P."/>
        </authorList>
    </citation>
    <scope>NUCLEOTIDE SEQUENCE [LARGE SCALE GENOMIC DNA]</scope>
    <source>
        <strain>OS185</strain>
    </source>
</reference>
<sequence>MNSQQCVIIAIAGASASGKSLIAKTIFDELRRDLGTDQIGVINEDAYYRDQSHLSMDERVLTNYDHPKALDHQLLCTHLQLLKSGEAVDIPCYSYTEHTRIAETLTMTPKKVIILEGILLLTDPKLRALMDASVFMDTPLDICFLRRLTRDVAERGRTMESVISQYKKTVRPMFLQFIEPSKQYADIIVPRGGKNRIATDILKTRIQHLLAK</sequence>
<accession>A6WP54</accession>
<comment type="catalytic activity">
    <reaction evidence="1">
        <text>uridine + ATP = UMP + ADP + H(+)</text>
        <dbReference type="Rhea" id="RHEA:16825"/>
        <dbReference type="ChEBI" id="CHEBI:15378"/>
        <dbReference type="ChEBI" id="CHEBI:16704"/>
        <dbReference type="ChEBI" id="CHEBI:30616"/>
        <dbReference type="ChEBI" id="CHEBI:57865"/>
        <dbReference type="ChEBI" id="CHEBI:456216"/>
        <dbReference type="EC" id="2.7.1.48"/>
    </reaction>
</comment>
<comment type="catalytic activity">
    <reaction evidence="1">
        <text>cytidine + ATP = CMP + ADP + H(+)</text>
        <dbReference type="Rhea" id="RHEA:24674"/>
        <dbReference type="ChEBI" id="CHEBI:15378"/>
        <dbReference type="ChEBI" id="CHEBI:17562"/>
        <dbReference type="ChEBI" id="CHEBI:30616"/>
        <dbReference type="ChEBI" id="CHEBI:60377"/>
        <dbReference type="ChEBI" id="CHEBI:456216"/>
        <dbReference type="EC" id="2.7.1.48"/>
    </reaction>
</comment>
<comment type="pathway">
    <text evidence="1">Pyrimidine metabolism; CTP biosynthesis via salvage pathway; CTP from cytidine: step 1/3.</text>
</comment>
<comment type="pathway">
    <text evidence="1">Pyrimidine metabolism; UMP biosynthesis via salvage pathway; UMP from uridine: step 1/1.</text>
</comment>
<comment type="subcellular location">
    <subcellularLocation>
        <location evidence="1">Cytoplasm</location>
    </subcellularLocation>
</comment>
<comment type="similarity">
    <text evidence="1">Belongs to the uridine kinase family.</text>
</comment>
<keyword id="KW-0067">ATP-binding</keyword>
<keyword id="KW-0963">Cytoplasm</keyword>
<keyword id="KW-0418">Kinase</keyword>
<keyword id="KW-0547">Nucleotide-binding</keyword>
<keyword id="KW-0808">Transferase</keyword>
<name>URK_SHEB8</name>
<protein>
    <recommendedName>
        <fullName evidence="1">Uridine kinase</fullName>
        <ecNumber evidence="1">2.7.1.48</ecNumber>
    </recommendedName>
    <alternativeName>
        <fullName evidence="1">Cytidine monophosphokinase</fullName>
    </alternativeName>
    <alternativeName>
        <fullName evidence="1">Uridine monophosphokinase</fullName>
    </alternativeName>
</protein>
<feature type="chain" id="PRO_1000017892" description="Uridine kinase">
    <location>
        <begin position="1"/>
        <end position="212"/>
    </location>
</feature>
<feature type="binding site" evidence="1">
    <location>
        <begin position="13"/>
        <end position="20"/>
    </location>
    <ligand>
        <name>ATP</name>
        <dbReference type="ChEBI" id="CHEBI:30616"/>
    </ligand>
</feature>
<proteinExistence type="inferred from homology"/>